<evidence type="ECO:0000255" key="1">
    <source>
        <dbReference type="HAMAP-Rule" id="MF_01151"/>
    </source>
</evidence>
<evidence type="ECO:0000256" key="2">
    <source>
        <dbReference type="SAM" id="MobiDB-lite"/>
    </source>
</evidence>
<gene>
    <name evidence="1" type="primary">grpE</name>
    <name type="ordered locus">lpp2008</name>
</gene>
<proteinExistence type="inferred from homology"/>
<protein>
    <recommendedName>
        <fullName evidence="1">Protein GrpE</fullName>
    </recommendedName>
    <alternativeName>
        <fullName evidence="1">HSP-70 cofactor</fullName>
    </alternativeName>
</protein>
<comment type="function">
    <text evidence="1">Participates actively in the response to hyperosmotic and heat shock by preventing the aggregation of stress-denatured proteins, in association with DnaK and GrpE. It is the nucleotide exchange factor for DnaK and may function as a thermosensor. Unfolded proteins bind initially to DnaJ; upon interaction with the DnaJ-bound protein, DnaK hydrolyzes its bound ATP, resulting in the formation of a stable complex. GrpE releases ADP from DnaK; ATP binding to DnaK triggers the release of the substrate protein, thus completing the reaction cycle. Several rounds of ATP-dependent interactions between DnaJ, DnaK and GrpE are required for fully efficient folding.</text>
</comment>
<comment type="subunit">
    <text evidence="1">Homodimer.</text>
</comment>
<comment type="subcellular location">
    <subcellularLocation>
        <location evidence="1">Cytoplasm</location>
    </subcellularLocation>
</comment>
<comment type="similarity">
    <text evidence="1">Belongs to the GrpE family.</text>
</comment>
<dbReference type="EMBL" id="CR628336">
    <property type="protein sequence ID" value="CAH13160.1"/>
    <property type="molecule type" value="Genomic_DNA"/>
</dbReference>
<dbReference type="RefSeq" id="WP_011214272.1">
    <property type="nucleotide sequence ID" value="NC_006368.1"/>
</dbReference>
<dbReference type="SMR" id="Q5X3M6"/>
<dbReference type="KEGG" id="lpp:lpp2008"/>
<dbReference type="LegioList" id="lpp2008"/>
<dbReference type="HOGENOM" id="CLU_057217_6_0_6"/>
<dbReference type="GO" id="GO:0005829">
    <property type="term" value="C:cytosol"/>
    <property type="evidence" value="ECO:0007669"/>
    <property type="project" value="TreeGrafter"/>
</dbReference>
<dbReference type="GO" id="GO:0000774">
    <property type="term" value="F:adenyl-nucleotide exchange factor activity"/>
    <property type="evidence" value="ECO:0007669"/>
    <property type="project" value="InterPro"/>
</dbReference>
<dbReference type="GO" id="GO:0042803">
    <property type="term" value="F:protein homodimerization activity"/>
    <property type="evidence" value="ECO:0007669"/>
    <property type="project" value="InterPro"/>
</dbReference>
<dbReference type="GO" id="GO:0051087">
    <property type="term" value="F:protein-folding chaperone binding"/>
    <property type="evidence" value="ECO:0007669"/>
    <property type="project" value="InterPro"/>
</dbReference>
<dbReference type="GO" id="GO:0051082">
    <property type="term" value="F:unfolded protein binding"/>
    <property type="evidence" value="ECO:0007669"/>
    <property type="project" value="TreeGrafter"/>
</dbReference>
<dbReference type="GO" id="GO:0006457">
    <property type="term" value="P:protein folding"/>
    <property type="evidence" value="ECO:0007669"/>
    <property type="project" value="InterPro"/>
</dbReference>
<dbReference type="CDD" id="cd00446">
    <property type="entry name" value="GrpE"/>
    <property type="match status" value="1"/>
</dbReference>
<dbReference type="FunFam" id="2.30.22.10:FF:000001">
    <property type="entry name" value="Protein GrpE"/>
    <property type="match status" value="1"/>
</dbReference>
<dbReference type="Gene3D" id="3.90.20.20">
    <property type="match status" value="1"/>
</dbReference>
<dbReference type="Gene3D" id="2.30.22.10">
    <property type="entry name" value="Head domain of nucleotide exchange factor GrpE"/>
    <property type="match status" value="1"/>
</dbReference>
<dbReference type="HAMAP" id="MF_01151">
    <property type="entry name" value="GrpE"/>
    <property type="match status" value="1"/>
</dbReference>
<dbReference type="InterPro" id="IPR000740">
    <property type="entry name" value="GrpE"/>
</dbReference>
<dbReference type="InterPro" id="IPR013805">
    <property type="entry name" value="GrpE_coiled_coil"/>
</dbReference>
<dbReference type="InterPro" id="IPR009012">
    <property type="entry name" value="GrpE_head"/>
</dbReference>
<dbReference type="NCBIfam" id="NF010737">
    <property type="entry name" value="PRK14139.1"/>
    <property type="match status" value="1"/>
</dbReference>
<dbReference type="NCBIfam" id="NF010738">
    <property type="entry name" value="PRK14140.1"/>
    <property type="match status" value="1"/>
</dbReference>
<dbReference type="NCBIfam" id="NF010742">
    <property type="entry name" value="PRK14144.1"/>
    <property type="match status" value="1"/>
</dbReference>
<dbReference type="NCBIfam" id="NF010748">
    <property type="entry name" value="PRK14150.1"/>
    <property type="match status" value="1"/>
</dbReference>
<dbReference type="PANTHER" id="PTHR21237">
    <property type="entry name" value="GRPE PROTEIN"/>
    <property type="match status" value="1"/>
</dbReference>
<dbReference type="PANTHER" id="PTHR21237:SF23">
    <property type="entry name" value="GRPE PROTEIN HOMOLOG, MITOCHONDRIAL"/>
    <property type="match status" value="1"/>
</dbReference>
<dbReference type="Pfam" id="PF01025">
    <property type="entry name" value="GrpE"/>
    <property type="match status" value="1"/>
</dbReference>
<dbReference type="PRINTS" id="PR00773">
    <property type="entry name" value="GRPEPROTEIN"/>
</dbReference>
<dbReference type="SUPFAM" id="SSF58014">
    <property type="entry name" value="Coiled-coil domain of nucleotide exchange factor GrpE"/>
    <property type="match status" value="1"/>
</dbReference>
<dbReference type="SUPFAM" id="SSF51064">
    <property type="entry name" value="Head domain of nucleotide exchange factor GrpE"/>
    <property type="match status" value="1"/>
</dbReference>
<dbReference type="PROSITE" id="PS01071">
    <property type="entry name" value="GRPE"/>
    <property type="match status" value="1"/>
</dbReference>
<organism>
    <name type="scientific">Legionella pneumophila (strain Paris)</name>
    <dbReference type="NCBI Taxonomy" id="297246"/>
    <lineage>
        <taxon>Bacteria</taxon>
        <taxon>Pseudomonadati</taxon>
        <taxon>Pseudomonadota</taxon>
        <taxon>Gammaproteobacteria</taxon>
        <taxon>Legionellales</taxon>
        <taxon>Legionellaceae</taxon>
        <taxon>Legionella</taxon>
    </lineage>
</organism>
<reference key="1">
    <citation type="journal article" date="2004" name="Nat. Genet.">
        <title>Evidence in the Legionella pneumophila genome for exploitation of host cell functions and high genome plasticity.</title>
        <authorList>
            <person name="Cazalet C."/>
            <person name="Rusniok C."/>
            <person name="Brueggemann H."/>
            <person name="Zidane N."/>
            <person name="Magnier A."/>
            <person name="Ma L."/>
            <person name="Tichit M."/>
            <person name="Jarraud S."/>
            <person name="Bouchier C."/>
            <person name="Vandenesch F."/>
            <person name="Kunst F."/>
            <person name="Etienne J."/>
            <person name="Glaser P."/>
            <person name="Buchrieser C."/>
        </authorList>
    </citation>
    <scope>NUCLEOTIDE SEQUENCE [LARGE SCALE GENOMIC DNA]</scope>
    <source>
        <strain>Paris</strain>
    </source>
</reference>
<sequence length="199" mass="22801">MSKQNKKDWKKFKDEHKEEHKVENEILEEEIDEKSQHQEPALGHPSYTALEEQLTLAEQKAHENWEKSVRALAELDNVRRRMEREVANAHKYGVEKLISALLPVVDSLEQALQLADKNSDPSMHEGLELTMKLFLDALQKFDVEQIDPLGQTFDPQQHEAMSMQPAPGAPPNSVITVFQKGYKLSDRVIRPARVIVSTK</sequence>
<name>GRPE_LEGPA</name>
<accession>Q5X3M6</accession>
<keyword id="KW-0143">Chaperone</keyword>
<keyword id="KW-0963">Cytoplasm</keyword>
<keyword id="KW-0346">Stress response</keyword>
<feature type="chain" id="PRO_1000053595" description="Protein GrpE">
    <location>
        <begin position="1"/>
        <end position="199"/>
    </location>
</feature>
<feature type="region of interest" description="Disordered" evidence="2">
    <location>
        <begin position="1"/>
        <end position="47"/>
    </location>
</feature>
<feature type="compositionally biased region" description="Basic and acidic residues" evidence="2">
    <location>
        <begin position="1"/>
        <end position="24"/>
    </location>
</feature>